<protein>
    <recommendedName>
        <fullName evidence="1">DNA-directed RNA polymerase subunit beta</fullName>
        <shortName evidence="1">RNAP subunit beta</shortName>
        <ecNumber evidence="1">2.7.7.6</ecNumber>
    </recommendedName>
    <alternativeName>
        <fullName evidence="1">RNA polymerase subunit beta</fullName>
    </alternativeName>
    <alternativeName>
        <fullName evidence="1">Transcriptase subunit beta</fullName>
    </alternativeName>
</protein>
<name>RPOB_FRAT1</name>
<gene>
    <name evidence="1" type="primary">rpoB</name>
    <name type="ordered locus">FTF0144</name>
</gene>
<organism>
    <name type="scientific">Francisella tularensis subsp. tularensis (strain FSC 198)</name>
    <dbReference type="NCBI Taxonomy" id="393115"/>
    <lineage>
        <taxon>Bacteria</taxon>
        <taxon>Pseudomonadati</taxon>
        <taxon>Pseudomonadota</taxon>
        <taxon>Gammaproteobacteria</taxon>
        <taxon>Thiotrichales</taxon>
        <taxon>Francisellaceae</taxon>
        <taxon>Francisella</taxon>
    </lineage>
</organism>
<evidence type="ECO:0000255" key="1">
    <source>
        <dbReference type="HAMAP-Rule" id="MF_01321"/>
    </source>
</evidence>
<dbReference type="EC" id="2.7.7.6" evidence="1"/>
<dbReference type="EMBL" id="AM286280">
    <property type="protein sequence ID" value="CAL08160.1"/>
    <property type="molecule type" value="Genomic_DNA"/>
</dbReference>
<dbReference type="RefSeq" id="WP_003019908.1">
    <property type="nucleotide sequence ID" value="NC_008245.1"/>
</dbReference>
<dbReference type="SMR" id="Q14JT5"/>
<dbReference type="GeneID" id="75264700"/>
<dbReference type="KEGG" id="ftf:FTF0144"/>
<dbReference type="HOGENOM" id="CLU_000524_4_3_6"/>
<dbReference type="GO" id="GO:0000428">
    <property type="term" value="C:DNA-directed RNA polymerase complex"/>
    <property type="evidence" value="ECO:0007669"/>
    <property type="project" value="UniProtKB-KW"/>
</dbReference>
<dbReference type="GO" id="GO:0003677">
    <property type="term" value="F:DNA binding"/>
    <property type="evidence" value="ECO:0007669"/>
    <property type="project" value="UniProtKB-UniRule"/>
</dbReference>
<dbReference type="GO" id="GO:0003899">
    <property type="term" value="F:DNA-directed RNA polymerase activity"/>
    <property type="evidence" value="ECO:0007669"/>
    <property type="project" value="UniProtKB-UniRule"/>
</dbReference>
<dbReference type="GO" id="GO:0032549">
    <property type="term" value="F:ribonucleoside binding"/>
    <property type="evidence" value="ECO:0007669"/>
    <property type="project" value="InterPro"/>
</dbReference>
<dbReference type="GO" id="GO:0006351">
    <property type="term" value="P:DNA-templated transcription"/>
    <property type="evidence" value="ECO:0007669"/>
    <property type="project" value="UniProtKB-UniRule"/>
</dbReference>
<dbReference type="CDD" id="cd00653">
    <property type="entry name" value="RNA_pol_B_RPB2"/>
    <property type="match status" value="1"/>
</dbReference>
<dbReference type="FunFam" id="3.90.1800.10:FF:000001">
    <property type="entry name" value="DNA-directed RNA polymerase subunit beta"/>
    <property type="match status" value="1"/>
</dbReference>
<dbReference type="Gene3D" id="2.40.50.100">
    <property type="match status" value="1"/>
</dbReference>
<dbReference type="Gene3D" id="2.40.50.150">
    <property type="match status" value="1"/>
</dbReference>
<dbReference type="Gene3D" id="3.90.1100.10">
    <property type="match status" value="2"/>
</dbReference>
<dbReference type="Gene3D" id="2.30.150.10">
    <property type="entry name" value="DNA-directed RNA polymerase, beta subunit, external 1 domain"/>
    <property type="match status" value="1"/>
</dbReference>
<dbReference type="Gene3D" id="2.40.270.10">
    <property type="entry name" value="DNA-directed RNA polymerase, subunit 2, domain 6"/>
    <property type="match status" value="2"/>
</dbReference>
<dbReference type="Gene3D" id="3.90.1800.10">
    <property type="entry name" value="RNA polymerase alpha subunit dimerisation domain"/>
    <property type="match status" value="1"/>
</dbReference>
<dbReference type="Gene3D" id="3.90.1110.10">
    <property type="entry name" value="RNA polymerase Rpb2, domain 2"/>
    <property type="match status" value="2"/>
</dbReference>
<dbReference type="HAMAP" id="MF_01321">
    <property type="entry name" value="RNApol_bact_RpoB"/>
    <property type="match status" value="1"/>
</dbReference>
<dbReference type="InterPro" id="IPR042107">
    <property type="entry name" value="DNA-dir_RNA_pol_bsu_ext_1_sf"/>
</dbReference>
<dbReference type="InterPro" id="IPR019462">
    <property type="entry name" value="DNA-dir_RNA_pol_bsu_external_1"/>
</dbReference>
<dbReference type="InterPro" id="IPR015712">
    <property type="entry name" value="DNA-dir_RNA_pol_su2"/>
</dbReference>
<dbReference type="InterPro" id="IPR007120">
    <property type="entry name" value="DNA-dir_RNAP_su2_dom"/>
</dbReference>
<dbReference type="InterPro" id="IPR037033">
    <property type="entry name" value="DNA-dir_RNAP_su2_hyb_sf"/>
</dbReference>
<dbReference type="InterPro" id="IPR010243">
    <property type="entry name" value="RNA_pol_bsu_bac"/>
</dbReference>
<dbReference type="InterPro" id="IPR007121">
    <property type="entry name" value="RNA_pol_bsu_CS"/>
</dbReference>
<dbReference type="InterPro" id="IPR007644">
    <property type="entry name" value="RNA_pol_bsu_protrusion"/>
</dbReference>
<dbReference type="InterPro" id="IPR007642">
    <property type="entry name" value="RNA_pol_Rpb2_2"/>
</dbReference>
<dbReference type="InterPro" id="IPR037034">
    <property type="entry name" value="RNA_pol_Rpb2_2_sf"/>
</dbReference>
<dbReference type="InterPro" id="IPR007645">
    <property type="entry name" value="RNA_pol_Rpb2_3"/>
</dbReference>
<dbReference type="InterPro" id="IPR007641">
    <property type="entry name" value="RNA_pol_Rpb2_7"/>
</dbReference>
<dbReference type="InterPro" id="IPR014724">
    <property type="entry name" value="RNA_pol_RPB2_OB-fold"/>
</dbReference>
<dbReference type="NCBIfam" id="NF001616">
    <property type="entry name" value="PRK00405.1"/>
    <property type="match status" value="1"/>
</dbReference>
<dbReference type="NCBIfam" id="TIGR02013">
    <property type="entry name" value="rpoB"/>
    <property type="match status" value="1"/>
</dbReference>
<dbReference type="PANTHER" id="PTHR20856">
    <property type="entry name" value="DNA-DIRECTED RNA POLYMERASE I SUBUNIT 2"/>
    <property type="match status" value="1"/>
</dbReference>
<dbReference type="Pfam" id="PF04563">
    <property type="entry name" value="RNA_pol_Rpb2_1"/>
    <property type="match status" value="1"/>
</dbReference>
<dbReference type="Pfam" id="PF04561">
    <property type="entry name" value="RNA_pol_Rpb2_2"/>
    <property type="match status" value="2"/>
</dbReference>
<dbReference type="Pfam" id="PF04565">
    <property type="entry name" value="RNA_pol_Rpb2_3"/>
    <property type="match status" value="1"/>
</dbReference>
<dbReference type="Pfam" id="PF10385">
    <property type="entry name" value="RNA_pol_Rpb2_45"/>
    <property type="match status" value="1"/>
</dbReference>
<dbReference type="Pfam" id="PF00562">
    <property type="entry name" value="RNA_pol_Rpb2_6"/>
    <property type="match status" value="1"/>
</dbReference>
<dbReference type="Pfam" id="PF04560">
    <property type="entry name" value="RNA_pol_Rpb2_7"/>
    <property type="match status" value="1"/>
</dbReference>
<dbReference type="SUPFAM" id="SSF64484">
    <property type="entry name" value="beta and beta-prime subunits of DNA dependent RNA-polymerase"/>
    <property type="match status" value="1"/>
</dbReference>
<dbReference type="PROSITE" id="PS01166">
    <property type="entry name" value="RNA_POL_BETA"/>
    <property type="match status" value="1"/>
</dbReference>
<comment type="function">
    <text evidence="1">DNA-dependent RNA polymerase catalyzes the transcription of DNA into RNA using the four ribonucleoside triphosphates as substrates.</text>
</comment>
<comment type="catalytic activity">
    <reaction evidence="1">
        <text>RNA(n) + a ribonucleoside 5'-triphosphate = RNA(n+1) + diphosphate</text>
        <dbReference type="Rhea" id="RHEA:21248"/>
        <dbReference type="Rhea" id="RHEA-COMP:14527"/>
        <dbReference type="Rhea" id="RHEA-COMP:17342"/>
        <dbReference type="ChEBI" id="CHEBI:33019"/>
        <dbReference type="ChEBI" id="CHEBI:61557"/>
        <dbReference type="ChEBI" id="CHEBI:140395"/>
        <dbReference type="EC" id="2.7.7.6"/>
    </reaction>
</comment>
<comment type="subunit">
    <text evidence="1">The RNAP catalytic core consists of 2 alpha, 1 beta, 1 beta' and 1 omega subunit. When a sigma factor is associated with the core the holoenzyme is formed, which can initiate transcription.</text>
</comment>
<comment type="similarity">
    <text evidence="1">Belongs to the RNA polymerase beta chain family.</text>
</comment>
<feature type="chain" id="PRO_0000300318" description="DNA-directed RNA polymerase subunit beta">
    <location>
        <begin position="1"/>
        <end position="1358"/>
    </location>
</feature>
<accession>Q14JT5</accession>
<proteinExistence type="inferred from homology"/>
<keyword id="KW-0240">DNA-directed RNA polymerase</keyword>
<keyword id="KW-0548">Nucleotidyltransferase</keyword>
<keyword id="KW-0804">Transcription</keyword>
<keyword id="KW-0808">Transferase</keyword>
<sequence>MSYSYAEKKRIRKEFGVLPHILDVPYLLSIQTESYKKFLTADAAKGRLHSGLEIVLKQSFPVESKNGQYELHYVDYQIGEPTFDETECQVRGATYDAPLNVKLRLVVYNKDALPNEKIVEDIREEYVYMGDIPLMTTNGTFIINGTERVVVSQLHRSPGVFFSKDDSEEGAFSARIIPYRGSWLDFEFDSKGIIWARIDRKRKFCATVILKALGYTQEQILENFSESKTITFNSKGFALRLDNLSNMKGELLKFDIVDAQDNVIVKKNKKLTSRDVKKIKDAGVDSVAIDFDLVSTLRVAKDIVNEATGEVIAYANDDVTESLLESCVEVGMLELEVIDFITTERGRYISDTLKYDLTRNTDEALVEIYKVLRPGDPPAAASVKALFEGLFFIESRYSLSDIGRMKLNARLGSDKVSKDIYTLENSDIVGVIEELINIRDGKGKVDDIDHLGNRRVRSVGEMVENQFRIGLYRVEKGIRESMSLVHKDKLMPKDIVNSKPITAAIKEFFTSGALSQFMDQDNPLSEVTHKRRISALGPGGLSRDRAGFEVRDVHATHYGRLCPIETPEGPNIGLINSLASYARVNDYGFLEAPYRKVVDGKVTDEIEYLSAIDEDNYVIAQASTKLDENNHFVEDLIQCRSGGEAIFTESSRVQYMDVSAKQMVSAAAALIPFLEHDDANRVLMGANMQRQAVPTLKSEKPLVGTGMEKIVARDSGNCIIARNAGEVAEVDSNRIVIKVDTEKSQTSNLVDIYSLTKFKRSNKNTCINQRPIVNVGDKVEAGDILADGFATDFGELSLGHNLMVAFMPWNGYNFEDSILLSERIVKDDKYTSIHIEEFTCVARDTKLGPEEITADIPNVSESSLAKLDESGIVHIGANVEAGDILVAKITPKAEQQLTPEERLLRAIFNEKASNVADSSLRMPSGTSGTVINVQVFENDKGGKSKRALKIEKELIDKARKDFDEEFAVIESVVKSSIEQEVVGAKIQKAKGLKKGAILTKEFLATLPFSKWLEISFEDEKLEEKVQNAREYYEEAKIAIDAKFEAKKKSITQSNELSPGVLKTVKVFVAIKKRIQPGDKMAGRHGNKGVVSRVLPVEDMPYMEDGTPVDVCLNPLGIPSRMNIGQILEAHLGLASYGLGKKIEKTLEKTRKAAELRKTLEEVYNSVGDKKVNLEALNDEEILTLCDNLKGGVPIATPVFDGAKEEDIKSLLKIGGFATNGQMKLFDGRTGKPFDRHVTVGYMYMLKLDHLVDDKMHARSTGSYSLVTQQPLGGKAQFGGQRFGEMEVWALQAYGAAYTLREMLTVKSDDIAGRSKMYKNIVDGKLTMNVDVPESFNVLRNEVRALGIDMDFDYSSEEE</sequence>
<reference key="1">
    <citation type="journal article" date="2007" name="PLoS ONE">
        <title>Genome sequencing shows that European isolates of Francisella tularensis subspecies tularensis are almost identical to US laboratory strain Schu S4.</title>
        <authorList>
            <person name="Chaudhuri R.R."/>
            <person name="Ren C.-P."/>
            <person name="Desmond L."/>
            <person name="Vincent G.A."/>
            <person name="Silman N.J."/>
            <person name="Brehm J.K."/>
            <person name="Elmore M.J."/>
            <person name="Hudson M.J."/>
            <person name="Forsman M."/>
            <person name="Isherwood K.E."/>
            <person name="Gurycova D."/>
            <person name="Minton N.P."/>
            <person name="Titball R.W."/>
            <person name="Pallen M.J."/>
            <person name="Vipond R."/>
        </authorList>
    </citation>
    <scope>NUCLEOTIDE SEQUENCE [LARGE SCALE GENOMIC DNA]</scope>
    <source>
        <strain>FSC 198</strain>
    </source>
</reference>